<dbReference type="EMBL" id="U74360">
    <property type="protein sequence ID" value="AAC60054.1"/>
    <property type="molecule type" value="mRNA"/>
</dbReference>
<dbReference type="EMBL" id="AB250387">
    <property type="protein sequence ID" value="BAE95405.2"/>
    <property type="molecule type" value="mRNA"/>
</dbReference>
<dbReference type="EMBL" id="BC044043">
    <property type="protein sequence ID" value="AAH44043.1"/>
    <property type="molecule type" value="mRNA"/>
</dbReference>
<dbReference type="RefSeq" id="NP_001080549.1">
    <molecule id="P70060-1"/>
    <property type="nucleotide sequence ID" value="NM_001087080.1"/>
</dbReference>
<dbReference type="RefSeq" id="NP_001090450.1">
    <property type="nucleotide sequence ID" value="NM_001096981.1"/>
</dbReference>
<dbReference type="RefSeq" id="XP_018079804.1">
    <property type="nucleotide sequence ID" value="XM_018224315.1"/>
</dbReference>
<dbReference type="RefSeq" id="XP_018082552.1">
    <property type="nucleotide sequence ID" value="XM_018227063.1"/>
</dbReference>
<dbReference type="PDB" id="6S9S">
    <property type="method" value="X-ray"/>
    <property type="resolution" value="2.20 A"/>
    <property type="chains" value="A=20-200"/>
</dbReference>
<dbReference type="PDB" id="6S9T">
    <property type="method" value="X-ray"/>
    <property type="resolution" value="2.05 A"/>
    <property type="chains" value="A=20-200"/>
</dbReference>
<dbReference type="PDBsum" id="6S9S"/>
<dbReference type="PDBsum" id="6S9T"/>
<dbReference type="SMR" id="P70060"/>
<dbReference type="DNASU" id="380241"/>
<dbReference type="GeneID" id="380241"/>
<dbReference type="GeneID" id="779363"/>
<dbReference type="KEGG" id="xla:380241"/>
<dbReference type="KEGG" id="xla:779363"/>
<dbReference type="CTD" id="380241"/>
<dbReference type="CTD" id="779363"/>
<dbReference type="OMA" id="KMSVGCA"/>
<dbReference type="OrthoDB" id="774557at2759"/>
<dbReference type="Proteomes" id="UP000186698">
    <property type="component" value="Chromosome 7L"/>
</dbReference>
<dbReference type="Proteomes" id="UP000186698">
    <property type="component" value="Chromosome 7S"/>
</dbReference>
<dbReference type="Bgee" id="380241">
    <property type="expression patterns" value="Expressed in gastrula and 19 other cell types or tissues"/>
</dbReference>
<dbReference type="GO" id="GO:0005634">
    <property type="term" value="C:nucleus"/>
    <property type="evidence" value="ECO:0000314"/>
    <property type="project" value="UniProtKB"/>
</dbReference>
<dbReference type="GO" id="GO:0005667">
    <property type="term" value="C:transcription regulator complex"/>
    <property type="evidence" value="ECO:0000318"/>
    <property type="project" value="GO_Central"/>
</dbReference>
<dbReference type="GO" id="GO:0140297">
    <property type="term" value="F:DNA-binding transcription factor binding"/>
    <property type="evidence" value="ECO:0000353"/>
    <property type="project" value="UniProtKB"/>
</dbReference>
<dbReference type="GO" id="GO:0042802">
    <property type="term" value="F:identical protein binding"/>
    <property type="evidence" value="ECO:0000353"/>
    <property type="project" value="UniProtKB"/>
</dbReference>
<dbReference type="GO" id="GO:0030274">
    <property type="term" value="F:LIM domain binding"/>
    <property type="evidence" value="ECO:0000353"/>
    <property type="project" value="UniProtKB"/>
</dbReference>
<dbReference type="GO" id="GO:0042803">
    <property type="term" value="F:protein homodimerization activity"/>
    <property type="evidence" value="ECO:0000314"/>
    <property type="project" value="UniProtKB"/>
</dbReference>
<dbReference type="GO" id="GO:0003712">
    <property type="term" value="F:transcription coregulator activity"/>
    <property type="evidence" value="ECO:0000318"/>
    <property type="project" value="GO_Central"/>
</dbReference>
<dbReference type="GO" id="GO:0001221">
    <property type="term" value="F:transcription coregulator binding"/>
    <property type="evidence" value="ECO:0000353"/>
    <property type="project" value="UniProtKB"/>
</dbReference>
<dbReference type="GO" id="GO:0000122">
    <property type="term" value="P:negative regulation of transcription by RNA polymerase II"/>
    <property type="evidence" value="ECO:0000318"/>
    <property type="project" value="GO_Central"/>
</dbReference>
<dbReference type="GO" id="GO:0007399">
    <property type="term" value="P:nervous system development"/>
    <property type="evidence" value="ECO:0000318"/>
    <property type="project" value="GO_Central"/>
</dbReference>
<dbReference type="GO" id="GO:0045893">
    <property type="term" value="P:positive regulation of DNA-templated transcription"/>
    <property type="evidence" value="ECO:0000314"/>
    <property type="project" value="UniProtKB"/>
</dbReference>
<dbReference type="GO" id="GO:0045944">
    <property type="term" value="P:positive regulation of transcription by RNA polymerase II"/>
    <property type="evidence" value="ECO:0000314"/>
    <property type="project" value="UniProtKB"/>
</dbReference>
<dbReference type="FunFam" id="2.10.110.10:FF:000063">
    <property type="entry name" value="LIM domain-binding protein 2 isoform X2"/>
    <property type="match status" value="1"/>
</dbReference>
<dbReference type="Gene3D" id="2.10.110.10">
    <property type="entry name" value="Cysteine Rich Protein"/>
    <property type="match status" value="1"/>
</dbReference>
<dbReference type="InterPro" id="IPR041363">
    <property type="entry name" value="LID"/>
</dbReference>
<dbReference type="InterPro" id="IPR029005">
    <property type="entry name" value="LIM-bd/SEUSS"/>
</dbReference>
<dbReference type="PANTHER" id="PTHR10378">
    <property type="entry name" value="LIM DOMAIN-BINDING PROTEIN"/>
    <property type="match status" value="1"/>
</dbReference>
<dbReference type="Pfam" id="PF17916">
    <property type="entry name" value="LID"/>
    <property type="match status" value="1"/>
</dbReference>
<dbReference type="Pfam" id="PF01803">
    <property type="entry name" value="LIM_bind"/>
    <property type="match status" value="1"/>
</dbReference>
<dbReference type="PROSITE" id="PS51957">
    <property type="entry name" value="LID"/>
    <property type="match status" value="1"/>
</dbReference>
<sequence length="375" mass="42825">MLDRDVGPTPMYPPTYLEPGIGRHTPYGNQTDYRIFELNKRLQNWTEECDNLWWDAFTTEFFEDDAMLTITFCLEDGPKRYTIGRTLIPRYFRSIFEGGATELYYVLKHPKESFHNNFVSLDCDQCTMVTQHGKPMFTQVCVEGRLYLEFMFDDMMRIKTWHFSIRQHRELIPRSILAMHAQDPQMLDQLSKNITRCGLSNSTLNYLRLCVILEPMQELMSRHKTYSLSPRDCLKTCLFQKWQRMVAPPAEPARQAPSKRRKRKMSGGSTMSSGGGNTNNSNSKKKSPASTFALSSQVPDVMVVGEPTLMGGEFGDEDERLITRLENTQFDAANGIDDEDSFNNSPALGANSPWNSKPPSSQESKSENPTSQASQ</sequence>
<protein>
    <recommendedName>
        <fullName>LIM domain-binding protein 1</fullName>
        <shortName>LDB-1</shortName>
        <shortName>xLdb1</shortName>
    </recommendedName>
</protein>
<gene>
    <name type="primary">ldb1</name>
</gene>
<evidence type="ECO:0000250" key="1"/>
<evidence type="ECO:0000255" key="2">
    <source>
        <dbReference type="PROSITE-ProRule" id="PRU01302"/>
    </source>
</evidence>
<evidence type="ECO:0000256" key="3">
    <source>
        <dbReference type="SAM" id="MobiDB-lite"/>
    </source>
</evidence>
<evidence type="ECO:0000269" key="4">
    <source>
    </source>
</evidence>
<evidence type="ECO:0000269" key="5">
    <source>
    </source>
</evidence>
<evidence type="ECO:0000269" key="6">
    <source>
    </source>
</evidence>
<evidence type="ECO:0000269" key="7">
    <source>
    </source>
</evidence>
<evidence type="ECO:0000269" key="8">
    <source>
    </source>
</evidence>
<evidence type="ECO:0000269" key="9">
    <source>
    </source>
</evidence>
<evidence type="ECO:0000269" key="10">
    <source>
    </source>
</evidence>
<evidence type="ECO:0000303" key="11">
    <source>
    </source>
</evidence>
<evidence type="ECO:0000305" key="12"/>
<evidence type="ECO:0007829" key="13">
    <source>
        <dbReference type="PDB" id="6S9T"/>
    </source>
</evidence>
<reference key="1">
    <citation type="journal article" date="1996" name="Nature">
        <title>Interactions of the LIM-domain-binding factor Ldb1 with LIM homeodomain proteins.</title>
        <authorList>
            <person name="Agulnick A.D."/>
            <person name="Taira M."/>
            <person name="Breen J.J."/>
            <person name="Tanaka T."/>
            <person name="Dawid I.B."/>
            <person name="Westphal H."/>
        </authorList>
    </citation>
    <scope>NUCLEOTIDE SEQUENCE [MRNA] (ISOFORM A)</scope>
    <scope>FUNCTION</scope>
    <scope>INTERACTION WITH LHX1</scope>
    <scope>SUBCELLULAR LOCATION</scope>
    <scope>TISSUE SPECIFICITY</scope>
    <source>
        <tissue>Gastrula</tissue>
    </source>
</reference>
<reference key="2">
    <citation type="journal article" date="2006" name="J. Biochem.">
        <title>Spliced isoforms of LIM-domain-binding protein (CLIM/NLI/Ldb) lacking the LIM-interaction domain.</title>
        <authorList>
            <person name="Tran Y.H."/>
            <person name="Xu Z."/>
            <person name="Kato A."/>
            <person name="Mistry A.C."/>
            <person name="Goya Y."/>
            <person name="Taira M."/>
            <person name="Brandt S.J."/>
            <person name="Hirose S."/>
        </authorList>
    </citation>
    <scope>NUCLEOTIDE SEQUENCE [MRNA] (ISOFORM B)</scope>
    <scope>ALTERNATIVE SPLICING</scope>
    <scope>TISSUE SPECIFICITY</scope>
    <scope>DEVELOPMENTAL STAGE</scope>
    <source>
        <tissue>Brain</tissue>
    </source>
</reference>
<reference key="3">
    <citation type="submission" date="2003-01" db="EMBL/GenBank/DDBJ databases">
        <authorList>
            <consortium name="NIH - Xenopus Gene Collection (XGC) project"/>
        </authorList>
    </citation>
    <scope>NUCLEOTIDE SEQUENCE [LARGE SCALE MRNA] (ISOFORM A)</scope>
    <source>
        <tissue>Embryo</tissue>
    </source>
</reference>
<reference key="4">
    <citation type="journal article" date="1998" name="J. Biol. Chem.">
        <title>Interactions between LIM domains and the LIM domain-binding protein Ldb1.</title>
        <authorList>
            <person name="Breen J.J."/>
            <person name="Agulnick A.D."/>
            <person name="Westphal H."/>
            <person name="Dawid I.B."/>
        </authorList>
    </citation>
    <scope>INTERACTION WITH LHX1</scope>
    <scope>HOMODIMERIZATION</scope>
</reference>
<reference key="5">
    <citation type="journal article" date="2000" name="Dev. Biol.">
        <title>Xlim-1 and LIM domain binding protein 1 cooperate with various transcription factors in the regulation of the goosecoid promoter.</title>
        <authorList>
            <person name="Mochizuki T."/>
            <person name="Karavanov A.A."/>
            <person name="Curtiss P.E."/>
            <person name="Ault K.T."/>
            <person name="Sugimoto N."/>
            <person name="Watabe T."/>
            <person name="Shiokawa K."/>
            <person name="Jamrich M."/>
            <person name="Cho K.W.Y."/>
            <person name="Dawid I.B."/>
            <person name="Taira M."/>
        </authorList>
    </citation>
    <scope>FUNCTION</scope>
</reference>
<reference key="6">
    <citation type="journal article" date="2000" name="Dev. Biol.">
        <title>A role for Xlim-1 in pronephros development in Xenopus laevis.</title>
        <authorList>
            <person name="Chan T.-C."/>
            <person name="Takahashi S."/>
            <person name="Asashima M."/>
        </authorList>
    </citation>
    <scope>TISSUE SPECIFICITY</scope>
</reference>
<reference key="7">
    <citation type="journal article" date="2002" name="Proc. Natl. Acad. Sci. U.S.A.">
        <title>Ssdp proteins interact with the LIM-domain-binding protein Ldb1 to regulate development.</title>
        <authorList>
            <person name="Chen L."/>
            <person name="Segal D."/>
            <person name="Hukriede N.A."/>
            <person name="Podtelejnikov A.V."/>
            <person name="Bayarsaihan D."/>
            <person name="Kennison J.A."/>
            <person name="Ogryzko V.V."/>
            <person name="Dawid I.B."/>
            <person name="Westphal H."/>
        </authorList>
    </citation>
    <scope>FUNCTION</scope>
</reference>
<reference key="8">
    <citation type="journal article" date="2003" name="Development">
        <title>Selective degradation of excess Ldb1 by Rnf12/RLIM confers proper Ldb1 expression levels and Xlim-1/Ldb1 stoichiometry in Xenopus organizer functions.</title>
        <authorList>
            <person name="Hiratani I."/>
            <person name="Yamamoto N."/>
            <person name="Mochizuki T."/>
            <person name="Ohmori S.-Y."/>
            <person name="Taira M."/>
        </authorList>
    </citation>
    <scope>INTERACTION WITH LHX1; LHX3; LHX5 AND RNF12</scope>
    <scope>HOMODIMERIZATION</scope>
    <scope>TISSUE SPECIFICITY</scope>
    <scope>DEGRADATION BY RNF12</scope>
</reference>
<feature type="chain" id="PRO_0000084386" description="LIM domain-binding protein 1">
    <location>
        <begin position="1"/>
        <end position="375"/>
    </location>
</feature>
<feature type="domain" description="LIM interaction domain (LID)" evidence="2">
    <location>
        <begin position="300"/>
        <end position="339"/>
    </location>
</feature>
<feature type="region of interest" description="Disordered" evidence="3">
    <location>
        <begin position="248"/>
        <end position="294"/>
    </location>
</feature>
<feature type="region of interest" description="Disordered" evidence="3">
    <location>
        <begin position="331"/>
        <end position="375"/>
    </location>
</feature>
<feature type="compositionally biased region" description="Low complexity" evidence="3">
    <location>
        <begin position="266"/>
        <end position="282"/>
    </location>
</feature>
<feature type="splice variant" id="VSP_027836" description="In isoform b." evidence="11">
    <original>DVMVV</original>
    <variation>ASASP</variation>
    <location>
        <begin position="300"/>
        <end position="304"/>
    </location>
</feature>
<feature type="splice variant" id="VSP_027837" description="In isoform b." evidence="11">
    <location>
        <begin position="305"/>
        <end position="375"/>
    </location>
</feature>
<feature type="sequence conflict" description="In Ref. 1; AAC60054." evidence="12" ref="1">
    <original>S</original>
    <variation>N</variation>
    <location>
        <position position="258"/>
    </location>
</feature>
<feature type="helix" evidence="13">
    <location>
        <begin position="32"/>
        <end position="42"/>
    </location>
</feature>
<feature type="helix" evidence="13">
    <location>
        <begin position="51"/>
        <end position="61"/>
    </location>
</feature>
<feature type="strand" evidence="13">
    <location>
        <begin position="62"/>
        <end position="71"/>
    </location>
</feature>
<feature type="strand" evidence="13">
    <location>
        <begin position="80"/>
        <end position="84"/>
    </location>
</feature>
<feature type="helix" evidence="13">
    <location>
        <begin position="85"/>
        <end position="87"/>
    </location>
</feature>
<feature type="helix" evidence="13">
    <location>
        <begin position="88"/>
        <end position="97"/>
    </location>
</feature>
<feature type="strand" evidence="13">
    <location>
        <begin position="100"/>
        <end position="107"/>
    </location>
</feature>
<feature type="strand" evidence="13">
    <location>
        <begin position="111"/>
        <end position="114"/>
    </location>
</feature>
<feature type="strand" evidence="13">
    <location>
        <begin position="116"/>
        <end position="132"/>
    </location>
</feature>
<feature type="turn" evidence="13">
    <location>
        <begin position="134"/>
        <end position="136"/>
    </location>
</feature>
<feature type="strand" evidence="13">
    <location>
        <begin position="139"/>
        <end position="151"/>
    </location>
</feature>
<feature type="turn" evidence="13">
    <location>
        <begin position="152"/>
        <end position="156"/>
    </location>
</feature>
<feature type="strand" evidence="13">
    <location>
        <begin position="158"/>
        <end position="171"/>
    </location>
</feature>
<feature type="helix" evidence="13">
    <location>
        <begin position="174"/>
        <end position="179"/>
    </location>
</feature>
<feature type="turn" evidence="13">
    <location>
        <begin position="180"/>
        <end position="182"/>
    </location>
</feature>
<feature type="helix" evidence="13">
    <location>
        <begin position="184"/>
        <end position="191"/>
    </location>
</feature>
<accession>P70060</accession>
<accession>Q1EQW8</accession>
<accession>Q7ZXZ7</accession>
<name>LDB1_XENLA</name>
<proteinExistence type="evidence at protein level"/>
<organism>
    <name type="scientific">Xenopus laevis</name>
    <name type="common">African clawed frog</name>
    <dbReference type="NCBI Taxonomy" id="8355"/>
    <lineage>
        <taxon>Eukaryota</taxon>
        <taxon>Metazoa</taxon>
        <taxon>Chordata</taxon>
        <taxon>Craniata</taxon>
        <taxon>Vertebrata</taxon>
        <taxon>Euteleostomi</taxon>
        <taxon>Amphibia</taxon>
        <taxon>Batrachia</taxon>
        <taxon>Anura</taxon>
        <taxon>Pipoidea</taxon>
        <taxon>Pipidae</taxon>
        <taxon>Xenopodinae</taxon>
        <taxon>Xenopus</taxon>
        <taxon>Xenopus</taxon>
    </lineage>
</organism>
<comment type="function">
    <text evidence="4 6 9">Binds to the LIM domain of a wide variety of LIM domain-containing transcription factors. Acts as a coactivator together with otx2 to stimulate lhx1/lim1-mediated activation of the gsc promoter in the Spemann organizer. Acts synergistically with lhx1/lim1 and ssbp in axis formation.</text>
</comment>
<comment type="subunit">
    <text evidence="7 9 10">Forms homodimers and heterodimers. Interacts with the LIM domain of LIM/homeobox factor lhx1/lim1, and with lhx3/lim3 and lhx5/lim5. Activates lhx1/lim1 by binding. The stoichiometry of lhx1/lim1 and ldb1 is important for their function and an excess of ldb1 can inhibit lhx1/lim1 function. When bound to lhx1/lim1, escapes degradation by rnf12. The N-terminus interacts with the N-terminal region of rnf12.</text>
</comment>
<comment type="subcellular location">
    <subcellularLocation>
        <location evidence="9">Nucleus</location>
    </subcellularLocation>
</comment>
<comment type="alternative products">
    <event type="alternative splicing"/>
    <isoform>
        <id>P70060-1</id>
        <name>a</name>
        <sequence type="displayed"/>
    </isoform>
    <isoform>
        <id>P70060-2</id>
        <name>b</name>
        <sequence type="described" ref="VSP_027836 VSP_027837"/>
    </isoform>
</comment>
<comment type="tissue specificity">
    <text evidence="5 7 8 9">Ubiquitously expressed in the early gastrula before localizing to the dorsal region of the vegetal hemisphere, which contains the Spemann organizer. Expressed in the CNS, pronephros and tail bud in neurula and tail-bud stage embryos. Expressed in multiple adult tissues including brain, heart, lung, stomach, intestine, liver, spleen, kidney, ovary, muscle and skin.</text>
</comment>
<comment type="developmental stage">
    <text evidence="8">Expressed both maternally and zygotically during embryogenesis.</text>
</comment>
<comment type="domain">
    <text evidence="1">The dimerization domain is located in the N-terminus.</text>
</comment>
<comment type="PTM">
    <text>Undergoes rnf12-mediated ubiquitin-proteasome-dependent degradation.</text>
</comment>
<comment type="miscellaneous">
    <molecule>Isoform b</molecule>
    <text evidence="12">Lacks LIM-binding domain.</text>
</comment>
<comment type="similarity">
    <text evidence="12">Belongs to the LDB family.</text>
</comment>
<keyword id="KW-0002">3D-structure</keyword>
<keyword id="KW-0025">Alternative splicing</keyword>
<keyword id="KW-0217">Developmental protein</keyword>
<keyword id="KW-0539">Nucleus</keyword>
<keyword id="KW-1185">Reference proteome</keyword>